<evidence type="ECO:0000255" key="1">
    <source>
        <dbReference type="HAMAP-Rule" id="MF_01197"/>
    </source>
</evidence>
<evidence type="ECO:0000256" key="2">
    <source>
        <dbReference type="SAM" id="MobiDB-lite"/>
    </source>
</evidence>
<feature type="chain" id="PRO_0000334063" description="Cell division protein SepF">
    <location>
        <begin position="1"/>
        <end position="191"/>
    </location>
</feature>
<feature type="region of interest" description="Disordered" evidence="2">
    <location>
        <begin position="153"/>
        <end position="191"/>
    </location>
</feature>
<feature type="compositionally biased region" description="Polar residues" evidence="2">
    <location>
        <begin position="153"/>
        <end position="178"/>
    </location>
</feature>
<sequence>MSLISRLKAVVAGDDYLDDDFDELDYASEDELNGVNDYKENRKNSNALSNSNPFDFMNNNRSSNVVGMPGISNSSSEVSLMEPRSFDEMPQAIQALRERKTVILNLTMMDPDQAQRAVDFVAGGTYAIDGHQERVGESIFLFAPSCVNVTSSFPEEVSPSNISSKKTSPYSLETNTTPEPAWGESKLSAFS</sequence>
<comment type="function">
    <text evidence="1">Cell division protein that is part of the divisome complex and is recruited early to the Z-ring. Probably stimulates Z-ring formation, perhaps through the cross-linking of FtsZ protofilaments. Its function overlaps with FtsA.</text>
</comment>
<comment type="subunit">
    <text evidence="1">Homodimer. Interacts with FtsZ.</text>
</comment>
<comment type="subcellular location">
    <subcellularLocation>
        <location evidence="1">Cytoplasm</location>
    </subcellularLocation>
    <text evidence="1">Localizes to the division site, in a FtsZ-dependent manner.</text>
</comment>
<comment type="similarity">
    <text evidence="1">Belongs to the SepF family.</text>
</comment>
<organism>
    <name type="scientific">Prochlorococcus marinus (strain MIT 9515)</name>
    <dbReference type="NCBI Taxonomy" id="167542"/>
    <lineage>
        <taxon>Bacteria</taxon>
        <taxon>Bacillati</taxon>
        <taxon>Cyanobacteriota</taxon>
        <taxon>Cyanophyceae</taxon>
        <taxon>Synechococcales</taxon>
        <taxon>Prochlorococcaceae</taxon>
        <taxon>Prochlorococcus</taxon>
    </lineage>
</organism>
<dbReference type="EMBL" id="CP000552">
    <property type="protein sequence ID" value="ABM71666.1"/>
    <property type="molecule type" value="Genomic_DNA"/>
</dbReference>
<dbReference type="RefSeq" id="WP_011819774.1">
    <property type="nucleotide sequence ID" value="NC_008817.1"/>
</dbReference>
<dbReference type="SMR" id="A2BV55"/>
<dbReference type="STRING" id="167542.P9515_04571"/>
<dbReference type="GeneID" id="60200420"/>
<dbReference type="KEGG" id="pmc:P9515_04571"/>
<dbReference type="eggNOG" id="COG1799">
    <property type="taxonomic scope" value="Bacteria"/>
</dbReference>
<dbReference type="HOGENOM" id="CLU_078499_1_0_3"/>
<dbReference type="OrthoDB" id="9815206at2"/>
<dbReference type="Proteomes" id="UP000001589">
    <property type="component" value="Chromosome"/>
</dbReference>
<dbReference type="GO" id="GO:0005737">
    <property type="term" value="C:cytoplasm"/>
    <property type="evidence" value="ECO:0007669"/>
    <property type="project" value="UniProtKB-SubCell"/>
</dbReference>
<dbReference type="GO" id="GO:0000917">
    <property type="term" value="P:division septum assembly"/>
    <property type="evidence" value="ECO:0007669"/>
    <property type="project" value="UniProtKB-KW"/>
</dbReference>
<dbReference type="GO" id="GO:0043093">
    <property type="term" value="P:FtsZ-dependent cytokinesis"/>
    <property type="evidence" value="ECO:0007669"/>
    <property type="project" value="UniProtKB-UniRule"/>
</dbReference>
<dbReference type="Gene3D" id="3.30.110.150">
    <property type="entry name" value="SepF-like protein"/>
    <property type="match status" value="1"/>
</dbReference>
<dbReference type="HAMAP" id="MF_01197">
    <property type="entry name" value="SepF"/>
    <property type="match status" value="1"/>
</dbReference>
<dbReference type="InterPro" id="IPR023052">
    <property type="entry name" value="Cell_div_SepF"/>
</dbReference>
<dbReference type="InterPro" id="IPR007561">
    <property type="entry name" value="Cell_div_SepF/SepF-rel"/>
</dbReference>
<dbReference type="InterPro" id="IPR038594">
    <property type="entry name" value="SepF-like_sf"/>
</dbReference>
<dbReference type="PANTHER" id="PTHR35798">
    <property type="entry name" value="CELL DIVISION PROTEIN SEPF"/>
    <property type="match status" value="1"/>
</dbReference>
<dbReference type="PANTHER" id="PTHR35798:SF1">
    <property type="entry name" value="CELL DIVISION PROTEIN SEPF"/>
    <property type="match status" value="1"/>
</dbReference>
<dbReference type="Pfam" id="PF04472">
    <property type="entry name" value="SepF"/>
    <property type="match status" value="1"/>
</dbReference>
<name>SEPF_PROM5</name>
<reference key="1">
    <citation type="journal article" date="2007" name="PLoS Genet.">
        <title>Patterns and implications of gene gain and loss in the evolution of Prochlorococcus.</title>
        <authorList>
            <person name="Kettler G.C."/>
            <person name="Martiny A.C."/>
            <person name="Huang K."/>
            <person name="Zucker J."/>
            <person name="Coleman M.L."/>
            <person name="Rodrigue S."/>
            <person name="Chen F."/>
            <person name="Lapidus A."/>
            <person name="Ferriera S."/>
            <person name="Johnson J."/>
            <person name="Steglich C."/>
            <person name="Church G.M."/>
            <person name="Richardson P."/>
            <person name="Chisholm S.W."/>
        </authorList>
    </citation>
    <scope>NUCLEOTIDE SEQUENCE [LARGE SCALE GENOMIC DNA]</scope>
    <source>
        <strain>MIT 9515</strain>
    </source>
</reference>
<keyword id="KW-0131">Cell cycle</keyword>
<keyword id="KW-0132">Cell division</keyword>
<keyword id="KW-0963">Cytoplasm</keyword>
<keyword id="KW-0717">Septation</keyword>
<accession>A2BV55</accession>
<gene>
    <name evidence="1" type="primary">sepF</name>
    <name type="ordered locus">P9515_04571</name>
</gene>
<proteinExistence type="inferred from homology"/>
<protein>
    <recommendedName>
        <fullName evidence="1">Cell division protein SepF</fullName>
    </recommendedName>
</protein>